<gene>
    <name type="ordered locus">Pput_0892</name>
</gene>
<dbReference type="EC" id="1.14.11.-" evidence="1"/>
<dbReference type="EMBL" id="CP000712">
    <property type="protein sequence ID" value="ABQ77054.1"/>
    <property type="molecule type" value="Genomic_DNA"/>
</dbReference>
<dbReference type="SMR" id="A5VYU4"/>
<dbReference type="KEGG" id="ppf:Pput_0892"/>
<dbReference type="eggNOG" id="COG3128">
    <property type="taxonomic scope" value="Bacteria"/>
</dbReference>
<dbReference type="HOGENOM" id="CLU_106663_0_0_6"/>
<dbReference type="GO" id="GO:0016706">
    <property type="term" value="F:2-oxoglutarate-dependent dioxygenase activity"/>
    <property type="evidence" value="ECO:0007669"/>
    <property type="project" value="UniProtKB-UniRule"/>
</dbReference>
<dbReference type="GO" id="GO:0005506">
    <property type="term" value="F:iron ion binding"/>
    <property type="evidence" value="ECO:0007669"/>
    <property type="project" value="UniProtKB-UniRule"/>
</dbReference>
<dbReference type="GO" id="GO:0031418">
    <property type="term" value="F:L-ascorbic acid binding"/>
    <property type="evidence" value="ECO:0007669"/>
    <property type="project" value="UniProtKB-KW"/>
</dbReference>
<dbReference type="GO" id="GO:0006974">
    <property type="term" value="P:DNA damage response"/>
    <property type="evidence" value="ECO:0007669"/>
    <property type="project" value="TreeGrafter"/>
</dbReference>
<dbReference type="GO" id="GO:0006879">
    <property type="term" value="P:intracellular iron ion homeostasis"/>
    <property type="evidence" value="ECO:0007669"/>
    <property type="project" value="TreeGrafter"/>
</dbReference>
<dbReference type="Gene3D" id="2.60.120.620">
    <property type="entry name" value="q2cbj1_9rhob like domain"/>
    <property type="match status" value="1"/>
</dbReference>
<dbReference type="Gene3D" id="4.10.860.20">
    <property type="entry name" value="Rabenosyn, Rab binding domain"/>
    <property type="match status" value="1"/>
</dbReference>
<dbReference type="HAMAP" id="MF_00657">
    <property type="entry name" value="Hydroxyl_YbiX"/>
    <property type="match status" value="1"/>
</dbReference>
<dbReference type="InterPro" id="IPR005123">
    <property type="entry name" value="Oxoglu/Fe-dep_dioxygenase_dom"/>
</dbReference>
<dbReference type="InterPro" id="IPR041097">
    <property type="entry name" value="PKHD_C"/>
</dbReference>
<dbReference type="InterPro" id="IPR023550">
    <property type="entry name" value="PKHD_hydroxylase"/>
</dbReference>
<dbReference type="InterPro" id="IPR006620">
    <property type="entry name" value="Pro_4_hyd_alph"/>
</dbReference>
<dbReference type="InterPro" id="IPR044862">
    <property type="entry name" value="Pro_4_hyd_alph_FE2OG_OXY"/>
</dbReference>
<dbReference type="NCBIfam" id="NF003974">
    <property type="entry name" value="PRK05467.1-3"/>
    <property type="match status" value="1"/>
</dbReference>
<dbReference type="NCBIfam" id="NF003975">
    <property type="entry name" value="PRK05467.1-4"/>
    <property type="match status" value="1"/>
</dbReference>
<dbReference type="PANTHER" id="PTHR41536">
    <property type="entry name" value="PKHD-TYPE HYDROXYLASE YBIX"/>
    <property type="match status" value="1"/>
</dbReference>
<dbReference type="PANTHER" id="PTHR41536:SF1">
    <property type="entry name" value="PKHD-TYPE HYDROXYLASE YBIX"/>
    <property type="match status" value="1"/>
</dbReference>
<dbReference type="Pfam" id="PF13640">
    <property type="entry name" value="2OG-FeII_Oxy_3"/>
    <property type="match status" value="1"/>
</dbReference>
<dbReference type="Pfam" id="PF18331">
    <property type="entry name" value="PKHD_C"/>
    <property type="match status" value="1"/>
</dbReference>
<dbReference type="SMART" id="SM00702">
    <property type="entry name" value="P4Hc"/>
    <property type="match status" value="1"/>
</dbReference>
<dbReference type="SUPFAM" id="SSF51197">
    <property type="entry name" value="Clavaminate synthase-like"/>
    <property type="match status" value="1"/>
</dbReference>
<dbReference type="PROSITE" id="PS51471">
    <property type="entry name" value="FE2OG_OXY"/>
    <property type="match status" value="1"/>
</dbReference>
<sequence>MLLHIPGLFDADELARICEALERADWADGKVTAGYQSAKAKHNLQLPEGHALAKEIGSALIDRLWKTPRFMSAALPHKVFPPLINCYREGGNFGFHIDNALRQPKGSPERVRTDLSSTLFLSDPESYDGGELVIQDTYGVQQVKLAAGDMVLYPGTSLHKVNPVTRGQRYAAFFWTQSLVRDDSQRTLLFEMDNAIQQLTADVPDHPSLLQLTGTYHNLLRRWAEV</sequence>
<reference key="1">
    <citation type="submission" date="2007-05" db="EMBL/GenBank/DDBJ databases">
        <title>Complete sequence of Pseudomonas putida F1.</title>
        <authorList>
            <consortium name="US DOE Joint Genome Institute"/>
            <person name="Copeland A."/>
            <person name="Lucas S."/>
            <person name="Lapidus A."/>
            <person name="Barry K."/>
            <person name="Detter J.C."/>
            <person name="Glavina del Rio T."/>
            <person name="Hammon N."/>
            <person name="Israni S."/>
            <person name="Dalin E."/>
            <person name="Tice H."/>
            <person name="Pitluck S."/>
            <person name="Chain P."/>
            <person name="Malfatti S."/>
            <person name="Shin M."/>
            <person name="Vergez L."/>
            <person name="Schmutz J."/>
            <person name="Larimer F."/>
            <person name="Land M."/>
            <person name="Hauser L."/>
            <person name="Kyrpides N."/>
            <person name="Lykidis A."/>
            <person name="Parales R."/>
            <person name="Richardson P."/>
        </authorList>
    </citation>
    <scope>NUCLEOTIDE SEQUENCE [LARGE SCALE GENOMIC DNA]</scope>
    <source>
        <strain>ATCC 700007 / DSM 6899 / JCM 31910 / BCRC 17059 / LMG 24140 / F1</strain>
    </source>
</reference>
<keyword id="KW-0223">Dioxygenase</keyword>
<keyword id="KW-0408">Iron</keyword>
<keyword id="KW-0479">Metal-binding</keyword>
<keyword id="KW-0560">Oxidoreductase</keyword>
<keyword id="KW-0847">Vitamin C</keyword>
<organism>
    <name type="scientific">Pseudomonas putida (strain ATCC 700007 / DSM 6899 / JCM 31910 / BCRC 17059 / LMG 24140 / F1)</name>
    <dbReference type="NCBI Taxonomy" id="351746"/>
    <lineage>
        <taxon>Bacteria</taxon>
        <taxon>Pseudomonadati</taxon>
        <taxon>Pseudomonadota</taxon>
        <taxon>Gammaproteobacteria</taxon>
        <taxon>Pseudomonadales</taxon>
        <taxon>Pseudomonadaceae</taxon>
        <taxon>Pseudomonas</taxon>
    </lineage>
</organism>
<proteinExistence type="inferred from homology"/>
<comment type="cofactor">
    <cofactor evidence="1">
        <name>Fe(2+)</name>
        <dbReference type="ChEBI" id="CHEBI:29033"/>
    </cofactor>
    <text evidence="1">Binds 1 Fe(2+) ion per subunit.</text>
</comment>
<comment type="cofactor">
    <cofactor evidence="1">
        <name>L-ascorbate</name>
        <dbReference type="ChEBI" id="CHEBI:38290"/>
    </cofactor>
</comment>
<name>Y892_PSEP1</name>
<protein>
    <recommendedName>
        <fullName evidence="1">PKHD-type hydroxylase Pput_0892</fullName>
        <ecNumber evidence="1">1.14.11.-</ecNumber>
    </recommendedName>
</protein>
<feature type="chain" id="PRO_1000061731" description="PKHD-type hydroxylase Pput_0892">
    <location>
        <begin position="1"/>
        <end position="226"/>
    </location>
</feature>
<feature type="domain" description="Fe2OG dioxygenase" evidence="1">
    <location>
        <begin position="78"/>
        <end position="178"/>
    </location>
</feature>
<feature type="binding site" evidence="1">
    <location>
        <position position="96"/>
    </location>
    <ligand>
        <name>Fe cation</name>
        <dbReference type="ChEBI" id="CHEBI:24875"/>
    </ligand>
</feature>
<feature type="binding site" evidence="1">
    <location>
        <position position="98"/>
    </location>
    <ligand>
        <name>Fe cation</name>
        <dbReference type="ChEBI" id="CHEBI:24875"/>
    </ligand>
</feature>
<feature type="binding site" evidence="1">
    <location>
        <position position="159"/>
    </location>
    <ligand>
        <name>Fe cation</name>
        <dbReference type="ChEBI" id="CHEBI:24875"/>
    </ligand>
</feature>
<feature type="binding site" evidence="1">
    <location>
        <position position="169"/>
    </location>
    <ligand>
        <name>2-oxoglutarate</name>
        <dbReference type="ChEBI" id="CHEBI:16810"/>
    </ligand>
</feature>
<accession>A5VYU4</accession>
<evidence type="ECO:0000255" key="1">
    <source>
        <dbReference type="HAMAP-Rule" id="MF_00657"/>
    </source>
</evidence>